<name>RSXE_SALA4</name>
<sequence length="230" mass="24318">MSEIKDIVVQGLWKNNSALVQLLGLCPLLAVTSTATNALGLGLATTLVLTLTNLTVSALRRWTPAEIRIPIYVMIIASVVSAVQMLINAYAFGLYQSLGIFIPLIVTNCIVVGRAEAFAAKKGPWLSALDGFSIGMGATGAMFVLGSLREILGNGTLFDGADSLLGGWAKVLRVEIFHTDSPFLLAMLPPGAFIGLGLMLAVKYLIDEKMKKRRAETAPSAVPAGETGKV</sequence>
<evidence type="ECO:0000255" key="1">
    <source>
        <dbReference type="HAMAP-Rule" id="MF_00478"/>
    </source>
</evidence>
<gene>
    <name evidence="1" type="primary">rsxE</name>
    <name type="ordered locus">SeAg_B1720</name>
</gene>
<keyword id="KW-0997">Cell inner membrane</keyword>
<keyword id="KW-1003">Cell membrane</keyword>
<keyword id="KW-0249">Electron transport</keyword>
<keyword id="KW-0472">Membrane</keyword>
<keyword id="KW-1278">Translocase</keyword>
<keyword id="KW-0812">Transmembrane</keyword>
<keyword id="KW-1133">Transmembrane helix</keyword>
<keyword id="KW-0813">Transport</keyword>
<dbReference type="EC" id="7.-.-.-" evidence="1"/>
<dbReference type="EMBL" id="CP001138">
    <property type="protein sequence ID" value="ACH49320.1"/>
    <property type="molecule type" value="Genomic_DNA"/>
</dbReference>
<dbReference type="RefSeq" id="WP_001289628.1">
    <property type="nucleotide sequence ID" value="NC_011149.1"/>
</dbReference>
<dbReference type="SMR" id="B5F6J3"/>
<dbReference type="KEGG" id="sea:SeAg_B1720"/>
<dbReference type="HOGENOM" id="CLU_046659_1_0_6"/>
<dbReference type="Proteomes" id="UP000008819">
    <property type="component" value="Chromosome"/>
</dbReference>
<dbReference type="GO" id="GO:0005886">
    <property type="term" value="C:plasma membrane"/>
    <property type="evidence" value="ECO:0007669"/>
    <property type="project" value="UniProtKB-SubCell"/>
</dbReference>
<dbReference type="GO" id="GO:0022900">
    <property type="term" value="P:electron transport chain"/>
    <property type="evidence" value="ECO:0007669"/>
    <property type="project" value="UniProtKB-UniRule"/>
</dbReference>
<dbReference type="HAMAP" id="MF_00478">
    <property type="entry name" value="RsxE_RnfE"/>
    <property type="match status" value="1"/>
</dbReference>
<dbReference type="InterPro" id="IPR003667">
    <property type="entry name" value="NqrDE/RnfAE"/>
</dbReference>
<dbReference type="InterPro" id="IPR010968">
    <property type="entry name" value="RnfE"/>
</dbReference>
<dbReference type="NCBIfam" id="NF009070">
    <property type="entry name" value="PRK12405.1"/>
    <property type="match status" value="1"/>
</dbReference>
<dbReference type="NCBIfam" id="TIGR01948">
    <property type="entry name" value="rnfE"/>
    <property type="match status" value="1"/>
</dbReference>
<dbReference type="PANTHER" id="PTHR30586">
    <property type="entry name" value="ELECTRON TRANSPORT COMPLEX PROTEIN RNFE"/>
    <property type="match status" value="1"/>
</dbReference>
<dbReference type="PANTHER" id="PTHR30586:SF0">
    <property type="entry name" value="ION-TRANSLOCATING OXIDOREDUCTASE COMPLEX SUBUNIT E"/>
    <property type="match status" value="1"/>
</dbReference>
<dbReference type="Pfam" id="PF02508">
    <property type="entry name" value="Rnf-Nqr"/>
    <property type="match status" value="1"/>
</dbReference>
<dbReference type="PIRSF" id="PIRSF006102">
    <property type="entry name" value="NQR_DE"/>
    <property type="match status" value="1"/>
</dbReference>
<comment type="function">
    <text evidence="1">Part of a membrane-bound complex that couples electron transfer with translocation of ions across the membrane. Required to maintain the reduced state of SoxR.</text>
</comment>
<comment type="subunit">
    <text evidence="1">The complex is composed of six subunits: RsxA, RsxB, RsxC, RsxD, RsxE and RsxG.</text>
</comment>
<comment type="subcellular location">
    <subcellularLocation>
        <location evidence="1">Cell inner membrane</location>
        <topology evidence="1">Multi-pass membrane protein</topology>
    </subcellularLocation>
</comment>
<comment type="similarity">
    <text evidence="1">Belongs to the NqrDE/RnfAE family.</text>
</comment>
<organism>
    <name type="scientific">Salmonella agona (strain SL483)</name>
    <dbReference type="NCBI Taxonomy" id="454166"/>
    <lineage>
        <taxon>Bacteria</taxon>
        <taxon>Pseudomonadati</taxon>
        <taxon>Pseudomonadota</taxon>
        <taxon>Gammaproteobacteria</taxon>
        <taxon>Enterobacterales</taxon>
        <taxon>Enterobacteriaceae</taxon>
        <taxon>Salmonella</taxon>
    </lineage>
</organism>
<accession>B5F6J3</accession>
<protein>
    <recommendedName>
        <fullName evidence="1">Ion-translocating oxidoreductase complex subunit E</fullName>
        <ecNumber evidence="1">7.-.-.-</ecNumber>
    </recommendedName>
    <alternativeName>
        <fullName evidence="1">Rsx electron transport complex subunit E</fullName>
    </alternativeName>
</protein>
<proteinExistence type="inferred from homology"/>
<reference key="1">
    <citation type="journal article" date="2011" name="J. Bacteriol.">
        <title>Comparative genomics of 28 Salmonella enterica isolates: evidence for CRISPR-mediated adaptive sublineage evolution.</title>
        <authorList>
            <person name="Fricke W.F."/>
            <person name="Mammel M.K."/>
            <person name="McDermott P.F."/>
            <person name="Tartera C."/>
            <person name="White D.G."/>
            <person name="Leclerc J.E."/>
            <person name="Ravel J."/>
            <person name="Cebula T.A."/>
        </authorList>
    </citation>
    <scope>NUCLEOTIDE SEQUENCE [LARGE SCALE GENOMIC DNA]</scope>
    <source>
        <strain>SL483</strain>
    </source>
</reference>
<feature type="chain" id="PRO_1000125858" description="Ion-translocating oxidoreductase complex subunit E">
    <location>
        <begin position="1"/>
        <end position="230"/>
    </location>
</feature>
<feature type="transmembrane region" description="Helical" evidence="1">
    <location>
        <begin position="18"/>
        <end position="38"/>
    </location>
</feature>
<feature type="transmembrane region" description="Helical" evidence="1">
    <location>
        <begin position="39"/>
        <end position="59"/>
    </location>
</feature>
<feature type="transmembrane region" description="Helical" evidence="1">
    <location>
        <begin position="63"/>
        <end position="83"/>
    </location>
</feature>
<feature type="transmembrane region" description="Helical" evidence="1">
    <location>
        <begin position="86"/>
        <end position="106"/>
    </location>
</feature>
<feature type="transmembrane region" description="Helical" evidence="1">
    <location>
        <begin position="125"/>
        <end position="145"/>
    </location>
</feature>
<feature type="transmembrane region" description="Helical" evidence="1">
    <location>
        <begin position="182"/>
        <end position="202"/>
    </location>
</feature>